<evidence type="ECO:0000250" key="1"/>
<evidence type="ECO:0000255" key="2">
    <source>
        <dbReference type="HAMAP-Rule" id="MF_00163"/>
    </source>
</evidence>
<sequence>MSVLQVLHIPDERLRKVAKPVEEVNAEIQRIVDDMFETMYAEEGIGLAATQVDIHQRIIVIDVSENRDERLVLINPELLEKSGETGIEEGCLSIPEQRALVPRAEKVKIRALDRDGKPFELEADGLLAICIQHEMDHLVGKLFMDYLSPLKQQRIRQKVEKLDRLKARA</sequence>
<gene>
    <name evidence="2" type="primary">def</name>
    <name type="synonym">fms</name>
    <name type="ordered locus">Z4657</name>
    <name type="ordered locus">ECs4152</name>
</gene>
<proteinExistence type="inferred from homology"/>
<reference key="1">
    <citation type="journal article" date="2001" name="Nature">
        <title>Genome sequence of enterohaemorrhagic Escherichia coli O157:H7.</title>
        <authorList>
            <person name="Perna N.T."/>
            <person name="Plunkett G. III"/>
            <person name="Burland V."/>
            <person name="Mau B."/>
            <person name="Glasner J.D."/>
            <person name="Rose D.J."/>
            <person name="Mayhew G.F."/>
            <person name="Evans P.S."/>
            <person name="Gregor J."/>
            <person name="Kirkpatrick H.A."/>
            <person name="Posfai G."/>
            <person name="Hackett J."/>
            <person name="Klink S."/>
            <person name="Boutin A."/>
            <person name="Shao Y."/>
            <person name="Miller L."/>
            <person name="Grotbeck E.J."/>
            <person name="Davis N.W."/>
            <person name="Lim A."/>
            <person name="Dimalanta E.T."/>
            <person name="Potamousis K."/>
            <person name="Apodaca J."/>
            <person name="Anantharaman T.S."/>
            <person name="Lin J."/>
            <person name="Yen G."/>
            <person name="Schwartz D.C."/>
            <person name="Welch R.A."/>
            <person name="Blattner F.R."/>
        </authorList>
    </citation>
    <scope>NUCLEOTIDE SEQUENCE [LARGE SCALE GENOMIC DNA]</scope>
    <source>
        <strain>O157:H7 / EDL933 / ATCC 700927 / EHEC</strain>
    </source>
</reference>
<reference key="2">
    <citation type="journal article" date="2001" name="DNA Res.">
        <title>Complete genome sequence of enterohemorrhagic Escherichia coli O157:H7 and genomic comparison with a laboratory strain K-12.</title>
        <authorList>
            <person name="Hayashi T."/>
            <person name="Makino K."/>
            <person name="Ohnishi M."/>
            <person name="Kurokawa K."/>
            <person name="Ishii K."/>
            <person name="Yokoyama K."/>
            <person name="Han C.-G."/>
            <person name="Ohtsubo E."/>
            <person name="Nakayama K."/>
            <person name="Murata T."/>
            <person name="Tanaka M."/>
            <person name="Tobe T."/>
            <person name="Iida T."/>
            <person name="Takami H."/>
            <person name="Honda T."/>
            <person name="Sasakawa C."/>
            <person name="Ogasawara N."/>
            <person name="Yasunaga T."/>
            <person name="Kuhara S."/>
            <person name="Shiba T."/>
            <person name="Hattori M."/>
            <person name="Shinagawa H."/>
        </authorList>
    </citation>
    <scope>NUCLEOTIDE SEQUENCE [LARGE SCALE GENOMIC DNA]</scope>
    <source>
        <strain>O157:H7 / Sakai / RIMD 0509952 / EHEC</strain>
    </source>
</reference>
<comment type="function">
    <text evidence="2">Removes the formyl group from the N-terminal Met of newly synthesized proteins. Requires at least a dipeptide for an efficient rate of reaction. N-terminal L-methionine is a prerequisite for activity but the enzyme has broad specificity at other positions.</text>
</comment>
<comment type="catalytic activity">
    <reaction evidence="2">
        <text>N-terminal N-formyl-L-methionyl-[peptide] + H2O = N-terminal L-methionyl-[peptide] + formate</text>
        <dbReference type="Rhea" id="RHEA:24420"/>
        <dbReference type="Rhea" id="RHEA-COMP:10639"/>
        <dbReference type="Rhea" id="RHEA-COMP:10640"/>
        <dbReference type="ChEBI" id="CHEBI:15377"/>
        <dbReference type="ChEBI" id="CHEBI:15740"/>
        <dbReference type="ChEBI" id="CHEBI:49298"/>
        <dbReference type="ChEBI" id="CHEBI:64731"/>
        <dbReference type="EC" id="3.5.1.88"/>
    </reaction>
</comment>
<comment type="cofactor">
    <cofactor evidence="2">
        <name>Fe(2+)</name>
        <dbReference type="ChEBI" id="CHEBI:29033"/>
    </cofactor>
    <text evidence="2">Binds 1 Fe(2+) ion.</text>
</comment>
<comment type="similarity">
    <text evidence="2">Belongs to the polypeptide deformylase family.</text>
</comment>
<organism>
    <name type="scientific">Escherichia coli O157:H7</name>
    <dbReference type="NCBI Taxonomy" id="83334"/>
    <lineage>
        <taxon>Bacteria</taxon>
        <taxon>Pseudomonadati</taxon>
        <taxon>Pseudomonadota</taxon>
        <taxon>Gammaproteobacteria</taxon>
        <taxon>Enterobacterales</taxon>
        <taxon>Enterobacteriaceae</taxon>
        <taxon>Escherichia</taxon>
    </lineage>
</organism>
<feature type="initiator methionine" description="Removed" evidence="1">
    <location>
        <position position="1"/>
    </location>
</feature>
<feature type="chain" id="PRO_0000082781" description="Peptide deformylase">
    <location>
        <begin position="2"/>
        <end position="169"/>
    </location>
</feature>
<feature type="active site" evidence="2">
    <location>
        <position position="134"/>
    </location>
</feature>
<feature type="binding site" evidence="2">
    <location>
        <position position="91"/>
    </location>
    <ligand>
        <name>Fe cation</name>
        <dbReference type="ChEBI" id="CHEBI:24875"/>
    </ligand>
</feature>
<feature type="binding site" evidence="2">
    <location>
        <position position="133"/>
    </location>
    <ligand>
        <name>Fe cation</name>
        <dbReference type="ChEBI" id="CHEBI:24875"/>
    </ligand>
</feature>
<feature type="binding site" evidence="2">
    <location>
        <position position="137"/>
    </location>
    <ligand>
        <name>Fe cation</name>
        <dbReference type="ChEBI" id="CHEBI:24875"/>
    </ligand>
</feature>
<dbReference type="EC" id="3.5.1.88" evidence="2"/>
<dbReference type="EMBL" id="AE005174">
    <property type="protein sequence ID" value="AAG58408.1"/>
    <property type="molecule type" value="Genomic_DNA"/>
</dbReference>
<dbReference type="EMBL" id="BA000007">
    <property type="protein sequence ID" value="BAB37575.1"/>
    <property type="molecule type" value="Genomic_DNA"/>
</dbReference>
<dbReference type="PIR" id="D85993">
    <property type="entry name" value="D85993"/>
</dbReference>
<dbReference type="PIR" id="H91147">
    <property type="entry name" value="H91147"/>
</dbReference>
<dbReference type="RefSeq" id="NP_312179.1">
    <property type="nucleotide sequence ID" value="NC_002695.1"/>
</dbReference>
<dbReference type="RefSeq" id="WP_000114984.1">
    <property type="nucleotide sequence ID" value="NZ_VOAI01000041.1"/>
</dbReference>
<dbReference type="SMR" id="P0A6K5"/>
<dbReference type="STRING" id="155864.Z4657"/>
<dbReference type="GeneID" id="89518132"/>
<dbReference type="GeneID" id="915993"/>
<dbReference type="KEGG" id="ece:Z4657"/>
<dbReference type="KEGG" id="ecs:ECs_4152"/>
<dbReference type="PATRIC" id="fig|386585.9.peg.4335"/>
<dbReference type="eggNOG" id="COG0242">
    <property type="taxonomic scope" value="Bacteria"/>
</dbReference>
<dbReference type="HOGENOM" id="CLU_061901_2_1_6"/>
<dbReference type="OMA" id="VCIQHEI"/>
<dbReference type="Proteomes" id="UP000000558">
    <property type="component" value="Chromosome"/>
</dbReference>
<dbReference type="Proteomes" id="UP000002519">
    <property type="component" value="Chromosome"/>
</dbReference>
<dbReference type="GO" id="GO:0046872">
    <property type="term" value="F:metal ion binding"/>
    <property type="evidence" value="ECO:0007669"/>
    <property type="project" value="UniProtKB-KW"/>
</dbReference>
<dbReference type="GO" id="GO:0042586">
    <property type="term" value="F:peptide deformylase activity"/>
    <property type="evidence" value="ECO:0007669"/>
    <property type="project" value="UniProtKB-UniRule"/>
</dbReference>
<dbReference type="GO" id="GO:0043686">
    <property type="term" value="P:co-translational protein modification"/>
    <property type="evidence" value="ECO:0007669"/>
    <property type="project" value="TreeGrafter"/>
</dbReference>
<dbReference type="GO" id="GO:0006412">
    <property type="term" value="P:translation"/>
    <property type="evidence" value="ECO:0007669"/>
    <property type="project" value="UniProtKB-UniRule"/>
</dbReference>
<dbReference type="CDD" id="cd00487">
    <property type="entry name" value="Pep_deformylase"/>
    <property type="match status" value="1"/>
</dbReference>
<dbReference type="FunFam" id="3.90.45.10:FF:000001">
    <property type="entry name" value="Peptide deformylase"/>
    <property type="match status" value="1"/>
</dbReference>
<dbReference type="Gene3D" id="3.90.45.10">
    <property type="entry name" value="Peptide deformylase"/>
    <property type="match status" value="1"/>
</dbReference>
<dbReference type="HAMAP" id="MF_00163">
    <property type="entry name" value="Pep_deformylase"/>
    <property type="match status" value="1"/>
</dbReference>
<dbReference type="InterPro" id="IPR023635">
    <property type="entry name" value="Peptide_deformylase"/>
</dbReference>
<dbReference type="InterPro" id="IPR036821">
    <property type="entry name" value="Peptide_deformylase_sf"/>
</dbReference>
<dbReference type="NCBIfam" id="TIGR00079">
    <property type="entry name" value="pept_deformyl"/>
    <property type="match status" value="1"/>
</dbReference>
<dbReference type="NCBIfam" id="NF001159">
    <property type="entry name" value="PRK00150.1-3"/>
    <property type="match status" value="1"/>
</dbReference>
<dbReference type="PANTHER" id="PTHR10458">
    <property type="entry name" value="PEPTIDE DEFORMYLASE"/>
    <property type="match status" value="1"/>
</dbReference>
<dbReference type="PANTHER" id="PTHR10458:SF21">
    <property type="entry name" value="PEPTIDE DEFORMYLASE"/>
    <property type="match status" value="1"/>
</dbReference>
<dbReference type="Pfam" id="PF01327">
    <property type="entry name" value="Pep_deformylase"/>
    <property type="match status" value="1"/>
</dbReference>
<dbReference type="PIRSF" id="PIRSF004749">
    <property type="entry name" value="Pep_def"/>
    <property type="match status" value="1"/>
</dbReference>
<dbReference type="PRINTS" id="PR01576">
    <property type="entry name" value="PDEFORMYLASE"/>
</dbReference>
<dbReference type="SUPFAM" id="SSF56420">
    <property type="entry name" value="Peptide deformylase"/>
    <property type="match status" value="1"/>
</dbReference>
<accession>P0A6K5</accession>
<accession>P27251</accession>
<name>DEF_ECO57</name>
<protein>
    <recommendedName>
        <fullName evidence="2">Peptide deformylase</fullName>
        <shortName evidence="2">PDF</shortName>
        <ecNumber evidence="2">3.5.1.88</ecNumber>
    </recommendedName>
    <alternativeName>
        <fullName evidence="2">Polypeptide deformylase</fullName>
    </alternativeName>
</protein>
<keyword id="KW-0378">Hydrolase</keyword>
<keyword id="KW-0408">Iron</keyword>
<keyword id="KW-0479">Metal-binding</keyword>
<keyword id="KW-0648">Protein biosynthesis</keyword>
<keyword id="KW-1185">Reference proteome</keyword>